<reference key="1">
    <citation type="journal article" date="1994" name="Genes Dev.">
        <title>A sequence-specific, single-strand binding protein activates the far upstream element of c-myc and defines a new DNA-binding motif.</title>
        <authorList>
            <person name="Duncan R."/>
            <person name="Bazar L."/>
            <person name="Michelotti G."/>
            <person name="Tomonaga T."/>
            <person name="Krutzsch H."/>
            <person name="Avigan M."/>
            <person name="Levens D."/>
        </authorList>
    </citation>
    <scope>NUCLEOTIDE SEQUENCE [MRNA] (ISOFORM 1)</scope>
    <scope>PROTEIN SEQUENCE OF 192-194; 204-207; 273-280; 285-291; 301-315; 322-329; 395-398; 410-412; 431-439 AND 441-444</scope>
    <scope>FUNCTION</scope>
    <source>
        <tissue>Leukemia</tissue>
    </source>
</reference>
<reference key="2">
    <citation type="journal article" date="2006" name="Nature">
        <title>The DNA sequence and biological annotation of human chromosome 1.</title>
        <authorList>
            <person name="Gregory S.G."/>
            <person name="Barlow K.F."/>
            <person name="McLay K.E."/>
            <person name="Kaul R."/>
            <person name="Swarbreck D."/>
            <person name="Dunham A."/>
            <person name="Scott C.E."/>
            <person name="Howe K.L."/>
            <person name="Woodfine K."/>
            <person name="Spencer C.C.A."/>
            <person name="Jones M.C."/>
            <person name="Gillson C."/>
            <person name="Searle S."/>
            <person name="Zhou Y."/>
            <person name="Kokocinski F."/>
            <person name="McDonald L."/>
            <person name="Evans R."/>
            <person name="Phillips K."/>
            <person name="Atkinson A."/>
            <person name="Cooper R."/>
            <person name="Jones C."/>
            <person name="Hall R.E."/>
            <person name="Andrews T.D."/>
            <person name="Lloyd C."/>
            <person name="Ainscough R."/>
            <person name="Almeida J.P."/>
            <person name="Ambrose K.D."/>
            <person name="Anderson F."/>
            <person name="Andrew R.W."/>
            <person name="Ashwell R.I.S."/>
            <person name="Aubin K."/>
            <person name="Babbage A.K."/>
            <person name="Bagguley C.L."/>
            <person name="Bailey J."/>
            <person name="Beasley H."/>
            <person name="Bethel G."/>
            <person name="Bird C.P."/>
            <person name="Bray-Allen S."/>
            <person name="Brown J.Y."/>
            <person name="Brown A.J."/>
            <person name="Buckley D."/>
            <person name="Burton J."/>
            <person name="Bye J."/>
            <person name="Carder C."/>
            <person name="Chapman J.C."/>
            <person name="Clark S.Y."/>
            <person name="Clarke G."/>
            <person name="Clee C."/>
            <person name="Cobley V."/>
            <person name="Collier R.E."/>
            <person name="Corby N."/>
            <person name="Coville G.J."/>
            <person name="Davies J."/>
            <person name="Deadman R."/>
            <person name="Dunn M."/>
            <person name="Earthrowl M."/>
            <person name="Ellington A.G."/>
            <person name="Errington H."/>
            <person name="Frankish A."/>
            <person name="Frankland J."/>
            <person name="French L."/>
            <person name="Garner P."/>
            <person name="Garnett J."/>
            <person name="Gay L."/>
            <person name="Ghori M.R.J."/>
            <person name="Gibson R."/>
            <person name="Gilby L.M."/>
            <person name="Gillett W."/>
            <person name="Glithero R.J."/>
            <person name="Grafham D.V."/>
            <person name="Griffiths C."/>
            <person name="Griffiths-Jones S."/>
            <person name="Grocock R."/>
            <person name="Hammond S."/>
            <person name="Harrison E.S.I."/>
            <person name="Hart E."/>
            <person name="Haugen E."/>
            <person name="Heath P.D."/>
            <person name="Holmes S."/>
            <person name="Holt K."/>
            <person name="Howden P.J."/>
            <person name="Hunt A.R."/>
            <person name="Hunt S.E."/>
            <person name="Hunter G."/>
            <person name="Isherwood J."/>
            <person name="James R."/>
            <person name="Johnson C."/>
            <person name="Johnson D."/>
            <person name="Joy A."/>
            <person name="Kay M."/>
            <person name="Kershaw J.K."/>
            <person name="Kibukawa M."/>
            <person name="Kimberley A.M."/>
            <person name="King A."/>
            <person name="Knights A.J."/>
            <person name="Lad H."/>
            <person name="Laird G."/>
            <person name="Lawlor S."/>
            <person name="Leongamornlert D.A."/>
            <person name="Lloyd D.M."/>
            <person name="Loveland J."/>
            <person name="Lovell J."/>
            <person name="Lush M.J."/>
            <person name="Lyne R."/>
            <person name="Martin S."/>
            <person name="Mashreghi-Mohammadi M."/>
            <person name="Matthews L."/>
            <person name="Matthews N.S.W."/>
            <person name="McLaren S."/>
            <person name="Milne S."/>
            <person name="Mistry S."/>
            <person name="Moore M.J.F."/>
            <person name="Nickerson T."/>
            <person name="O'Dell C.N."/>
            <person name="Oliver K."/>
            <person name="Palmeiri A."/>
            <person name="Palmer S.A."/>
            <person name="Parker A."/>
            <person name="Patel D."/>
            <person name="Pearce A.V."/>
            <person name="Peck A.I."/>
            <person name="Pelan S."/>
            <person name="Phelps K."/>
            <person name="Phillimore B.J."/>
            <person name="Plumb R."/>
            <person name="Rajan J."/>
            <person name="Raymond C."/>
            <person name="Rouse G."/>
            <person name="Saenphimmachak C."/>
            <person name="Sehra H.K."/>
            <person name="Sheridan E."/>
            <person name="Shownkeen R."/>
            <person name="Sims S."/>
            <person name="Skuce C.D."/>
            <person name="Smith M."/>
            <person name="Steward C."/>
            <person name="Subramanian S."/>
            <person name="Sycamore N."/>
            <person name="Tracey A."/>
            <person name="Tromans A."/>
            <person name="Van Helmond Z."/>
            <person name="Wall M."/>
            <person name="Wallis J.M."/>
            <person name="White S."/>
            <person name="Whitehead S.L."/>
            <person name="Wilkinson J.E."/>
            <person name="Willey D.L."/>
            <person name="Williams H."/>
            <person name="Wilming L."/>
            <person name="Wray P.W."/>
            <person name="Wu Z."/>
            <person name="Coulson A."/>
            <person name="Vaudin M."/>
            <person name="Sulston J.E."/>
            <person name="Durbin R.M."/>
            <person name="Hubbard T."/>
            <person name="Wooster R."/>
            <person name="Dunham I."/>
            <person name="Carter N.P."/>
            <person name="McVean G."/>
            <person name="Ross M.T."/>
            <person name="Harrow J."/>
            <person name="Olson M.V."/>
            <person name="Beck S."/>
            <person name="Rogers J."/>
            <person name="Bentley D.R."/>
        </authorList>
    </citation>
    <scope>NUCLEOTIDE SEQUENCE [LARGE SCALE GENOMIC DNA]</scope>
</reference>
<reference key="3">
    <citation type="journal article" date="2004" name="Genome Res.">
        <title>The status, quality, and expansion of the NIH full-length cDNA project: the Mammalian Gene Collection (MGC).</title>
        <authorList>
            <consortium name="The MGC Project Team"/>
        </authorList>
    </citation>
    <scope>NUCLEOTIDE SEQUENCE [LARGE SCALE MRNA] (ISOFORM 2)</scope>
    <source>
        <tissue>Brain</tissue>
    </source>
</reference>
<reference key="4">
    <citation type="journal article" date="2001" name="Nucleic Acids Res.">
        <title>Identification of human DNA helicase V with the far upstream element-binding protein.</title>
        <authorList>
            <person name="Vindigni A."/>
            <person name="Ochem A."/>
            <person name="Triolo G."/>
            <person name="Falaschi A."/>
        </authorList>
    </citation>
    <scope>PROTEIN SEQUENCE OF 45-64; 134-146; 272-284; 309-322; 380-387; 415-425 AND 431-440</scope>
</reference>
<reference key="5">
    <citation type="submission" date="2008-12" db="UniProtKB">
        <authorList>
            <person name="Lubec G."/>
            <person name="Afjehi-Sadat L."/>
            <person name="Chen W.-Q."/>
            <person name="Sun Y."/>
        </authorList>
    </citation>
    <scope>PROTEIN SEQUENCE OF 107-118; 134-146; 163-170; 249-256; 272-293 AND 332-344</scope>
    <scope>IDENTIFICATION BY MASS SPECTROMETRY</scope>
    <source>
        <tissue>Brain</tissue>
        <tissue>Cajal-Retzius cell</tissue>
        <tissue>Fetal brain cortex</tissue>
    </source>
</reference>
<reference key="6">
    <citation type="journal article" date="2002" name="Genome Res.">
        <title>Large-scale proteomic analysis of the human spliceosome.</title>
        <authorList>
            <person name="Rappsilber J."/>
            <person name="Ryder U."/>
            <person name="Lamond A.I."/>
            <person name="Mann M."/>
        </authorList>
    </citation>
    <scope>PARTIAL PROTEIN SEQUENCE</scope>
    <scope>IDENTIFICATION BY MASS SPECTROMETRY</scope>
</reference>
<reference key="7">
    <citation type="journal article" date="2000" name="Mol. Cell">
        <title>The FBP interacting repressor targets TFIIH to inhibit activated transcription.</title>
        <authorList>
            <person name="Liu J."/>
            <person name="He L."/>
            <person name="Collins I."/>
            <person name="Ge H."/>
            <person name="Libutti D."/>
            <person name="Li J."/>
            <person name="Egly J.-M."/>
            <person name="Levens D."/>
        </authorList>
    </citation>
    <scope>IDENTIFICATION IN A COMPLEX WITH PUF60 AND FUSE DNA</scope>
    <scope>INTERACTION WITH PUF60</scope>
</reference>
<reference key="8">
    <citation type="journal article" date="2003" name="Nat. Genet.">
        <title>Downregulation of FUSE-binding protein and c-myc by tRNA synthetase cofactor p38 is required for lung cell differentiation.</title>
        <authorList>
            <person name="Kim M.J."/>
            <person name="Park B.-J."/>
            <person name="Kang Y.-S."/>
            <person name="Kim H.J."/>
            <person name="Park J.-H."/>
            <person name="Kang J.W."/>
            <person name="Lee S.W."/>
            <person name="Han J.M."/>
            <person name="Lee H.-W."/>
            <person name="Kim S."/>
        </authorList>
    </citation>
    <scope>INTERACTION WITH JTV1</scope>
    <scope>UBIQUITINATION</scope>
    <scope>PROTEASOME-MEDIATED DEGRADATION</scope>
</reference>
<reference key="9">
    <citation type="journal article" date="2005" name="Nat. Biotechnol.">
        <title>Immunoaffinity profiling of tyrosine phosphorylation in cancer cells.</title>
        <authorList>
            <person name="Rush J."/>
            <person name="Moritz A."/>
            <person name="Lee K.A."/>
            <person name="Guo A."/>
            <person name="Goss V.L."/>
            <person name="Spek E.J."/>
            <person name="Zhang H."/>
            <person name="Zha X.-M."/>
            <person name="Polakiewicz R.D."/>
            <person name="Comb M.J."/>
        </authorList>
    </citation>
    <scope>IDENTIFICATION BY MASS SPECTROMETRY [LARGE SCALE ANALYSIS]</scope>
</reference>
<reference key="10">
    <citation type="journal article" date="2006" name="Cell">
        <title>Global, in vivo, and site-specific phosphorylation dynamics in signaling networks.</title>
        <authorList>
            <person name="Olsen J.V."/>
            <person name="Blagoev B."/>
            <person name="Gnad F."/>
            <person name="Macek B."/>
            <person name="Kumar C."/>
            <person name="Mortensen P."/>
            <person name="Mann M."/>
        </authorList>
    </citation>
    <scope>IDENTIFICATION BY MASS SPECTROMETRY [LARGE SCALE ANALYSIS]</scope>
    <source>
        <tissue>Cervix carcinoma</tissue>
    </source>
</reference>
<reference key="11">
    <citation type="journal article" date="2006" name="Nat. Biotechnol.">
        <title>A probability-based approach for high-throughput protein phosphorylation analysis and site localization.</title>
        <authorList>
            <person name="Beausoleil S.A."/>
            <person name="Villen J."/>
            <person name="Gerber S.A."/>
            <person name="Rush J."/>
            <person name="Gygi S.P."/>
        </authorList>
    </citation>
    <scope>IDENTIFICATION BY MASS SPECTROMETRY [LARGE SCALE ANALYSIS]</scope>
    <source>
        <tissue>Cervix carcinoma</tissue>
    </source>
</reference>
<reference key="12">
    <citation type="journal article" date="2008" name="Proc. Natl. Acad. Sci. U.S.A.">
        <title>A quantitative atlas of mitotic phosphorylation.</title>
        <authorList>
            <person name="Dephoure N."/>
            <person name="Zhou C."/>
            <person name="Villen J."/>
            <person name="Beausoleil S.A."/>
            <person name="Bakalarski C.E."/>
            <person name="Elledge S.J."/>
            <person name="Gygi S.P."/>
        </authorList>
    </citation>
    <scope>PHOSPHORYLATION [LARGE SCALE ANALYSIS] AT THR-153 AND SER-630</scope>
    <scope>IDENTIFICATION BY MASS SPECTROMETRY [LARGE SCALE ANALYSIS]</scope>
    <source>
        <tissue>Cervix carcinoma</tissue>
    </source>
</reference>
<reference key="13">
    <citation type="journal article" date="2009" name="Anal. Chem.">
        <title>Lys-N and trypsin cover complementary parts of the phosphoproteome in a refined SCX-based approach.</title>
        <authorList>
            <person name="Gauci S."/>
            <person name="Helbig A.O."/>
            <person name="Slijper M."/>
            <person name="Krijgsveld J."/>
            <person name="Heck A.J."/>
            <person name="Mohammed S."/>
        </authorList>
    </citation>
    <scope>ACETYLATION [LARGE SCALE ANALYSIS] AT ALA-2</scope>
    <scope>CLEAVAGE OF INITIATOR METHIONINE [LARGE SCALE ANALYSIS]</scope>
    <scope>IDENTIFICATION BY MASS SPECTROMETRY [LARGE SCALE ANALYSIS]</scope>
</reference>
<reference key="14">
    <citation type="journal article" date="2009" name="Sci. Signal.">
        <title>Quantitative phosphoproteomic analysis of T cell receptor signaling reveals system-wide modulation of protein-protein interactions.</title>
        <authorList>
            <person name="Mayya V."/>
            <person name="Lundgren D.H."/>
            <person name="Hwang S.-I."/>
            <person name="Rezaul K."/>
            <person name="Wu L."/>
            <person name="Eng J.K."/>
            <person name="Rodionov V."/>
            <person name="Han D.K."/>
        </authorList>
    </citation>
    <scope>PHOSPHORYLATION [LARGE SCALE ANALYSIS] AT SER-630</scope>
    <scope>IDENTIFICATION BY MASS SPECTROMETRY [LARGE SCALE ANALYSIS]</scope>
    <source>
        <tissue>Leukemic T-cell</tissue>
    </source>
</reference>
<reference key="15">
    <citation type="journal article" date="2010" name="Sci. Signal.">
        <title>Quantitative phosphoproteomics reveals widespread full phosphorylation site occupancy during mitosis.</title>
        <authorList>
            <person name="Olsen J.V."/>
            <person name="Vermeulen M."/>
            <person name="Santamaria A."/>
            <person name="Kumar C."/>
            <person name="Miller M.L."/>
            <person name="Jensen L.J."/>
            <person name="Gnad F."/>
            <person name="Cox J."/>
            <person name="Jensen T.S."/>
            <person name="Nigg E.A."/>
            <person name="Brunak S."/>
            <person name="Mann M."/>
        </authorList>
    </citation>
    <scope>PHOSPHORYLATION [LARGE SCALE ANALYSIS] AT THR-153 AND SER-630</scope>
    <scope>IDENTIFICATION BY MASS SPECTROMETRY [LARGE SCALE ANALYSIS]</scope>
    <source>
        <tissue>Cervix carcinoma</tissue>
    </source>
</reference>
<reference key="16">
    <citation type="journal article" date="2011" name="BMC Syst. Biol.">
        <title>Initial characterization of the human central proteome.</title>
        <authorList>
            <person name="Burkard T.R."/>
            <person name="Planyavsky M."/>
            <person name="Kaupe I."/>
            <person name="Breitwieser F.P."/>
            <person name="Buerckstuemmer T."/>
            <person name="Bennett K.L."/>
            <person name="Superti-Furga G."/>
            <person name="Colinge J."/>
        </authorList>
    </citation>
    <scope>IDENTIFICATION BY MASS SPECTROMETRY [LARGE SCALE ANALYSIS]</scope>
</reference>
<reference key="17">
    <citation type="journal article" date="2011" name="Sci. Signal.">
        <title>System-wide temporal characterization of the proteome and phosphoproteome of human embryonic stem cell differentiation.</title>
        <authorList>
            <person name="Rigbolt K.T."/>
            <person name="Prokhorova T.A."/>
            <person name="Akimov V."/>
            <person name="Henningsen J."/>
            <person name="Johansen P.T."/>
            <person name="Kratchmarova I."/>
            <person name="Kassem M."/>
            <person name="Mann M."/>
            <person name="Olsen J.V."/>
            <person name="Blagoev B."/>
        </authorList>
    </citation>
    <scope>PHOSPHORYLATION [LARGE SCALE ANALYSIS] AT SER-140 AND SER-630</scope>
    <scope>IDENTIFICATION BY MASS SPECTROMETRY [LARGE SCALE ANALYSIS]</scope>
</reference>
<reference key="18">
    <citation type="journal article" date="2013" name="J. Proteome Res.">
        <title>Toward a comprehensive characterization of a human cancer cell phosphoproteome.</title>
        <authorList>
            <person name="Zhou H."/>
            <person name="Di Palma S."/>
            <person name="Preisinger C."/>
            <person name="Peng M."/>
            <person name="Polat A.N."/>
            <person name="Heck A.J."/>
            <person name="Mohammed S."/>
        </authorList>
    </citation>
    <scope>PHOSPHORYLATION [LARGE SCALE ANALYSIS] AT SER-52; SER-55; SER-140; THR-153 AND THR-432</scope>
    <scope>IDENTIFICATION BY MASS SPECTROMETRY [LARGE SCALE ANALYSIS]</scope>
    <source>
        <tissue>Cervix carcinoma</tissue>
        <tissue>Erythroleukemia</tissue>
    </source>
</reference>
<reference key="19">
    <citation type="journal article" date="2014" name="Mol. Cell. Proteomics">
        <title>Immunoaffinity enrichment and mass spectrometry analysis of protein methylation.</title>
        <authorList>
            <person name="Guo A."/>
            <person name="Gu H."/>
            <person name="Zhou J."/>
            <person name="Mulhern D."/>
            <person name="Wang Y."/>
            <person name="Lee K.A."/>
            <person name="Yang V."/>
            <person name="Aguiar M."/>
            <person name="Kornhauser J."/>
            <person name="Jia X."/>
            <person name="Ren J."/>
            <person name="Beausoleil S.A."/>
            <person name="Silva J.C."/>
            <person name="Vemulapalli V."/>
            <person name="Bedford M.T."/>
            <person name="Comb M.J."/>
        </authorList>
    </citation>
    <scope>METHYLATION [LARGE SCALE ANALYSIS] AT ARG-359; ARG-361 AND ARG-363</scope>
    <scope>IDENTIFICATION BY MASS SPECTROMETRY [LARGE SCALE ANALYSIS]</scope>
    <source>
        <tissue>Colon carcinoma</tissue>
    </source>
</reference>
<reference key="20">
    <citation type="journal article" date="2002" name="Nature">
        <title>Structure and dynamics of KH domains from FBP bound to single-stranded DNA.</title>
        <authorList>
            <person name="Braddock D.T."/>
            <person name="Louis J.M."/>
            <person name="Baber J.L."/>
            <person name="Levens D."/>
            <person name="Clore G.M."/>
        </authorList>
    </citation>
    <scope>STRUCTURE BY NMR OF 278-447 IN COMPLEX WITH SINGLE-STRANDED FUSE DNA</scope>
</reference>
<protein>
    <recommendedName>
        <fullName>Far upstream element-binding protein 1</fullName>
        <shortName>FBP</shortName>
        <shortName>FUSE-binding protein 1</shortName>
    </recommendedName>
    <alternativeName>
        <fullName>DNA helicase V</fullName>
        <shortName>hDH V</shortName>
    </alternativeName>
</protein>
<proteinExistence type="evidence at protein level"/>
<name>FUBP1_HUMAN</name>
<organism>
    <name type="scientific">Homo sapiens</name>
    <name type="common">Human</name>
    <dbReference type="NCBI Taxonomy" id="9606"/>
    <lineage>
        <taxon>Eukaryota</taxon>
        <taxon>Metazoa</taxon>
        <taxon>Chordata</taxon>
        <taxon>Craniata</taxon>
        <taxon>Vertebrata</taxon>
        <taxon>Euteleostomi</taxon>
        <taxon>Mammalia</taxon>
        <taxon>Eutheria</taxon>
        <taxon>Euarchontoglires</taxon>
        <taxon>Primates</taxon>
        <taxon>Haplorrhini</taxon>
        <taxon>Catarrhini</taxon>
        <taxon>Hominidae</taxon>
        <taxon>Homo</taxon>
    </lineage>
</organism>
<dbReference type="EMBL" id="U05040">
    <property type="protein sequence ID" value="AAA17976.2"/>
    <property type="molecule type" value="mRNA"/>
</dbReference>
<dbReference type="EMBL" id="AC096948">
    <property type="status" value="NOT_ANNOTATED_CDS"/>
    <property type="molecule type" value="Genomic_DNA"/>
</dbReference>
<dbReference type="EMBL" id="BC017247">
    <property type="protein sequence ID" value="AAH17247.1"/>
    <property type="molecule type" value="mRNA"/>
</dbReference>
<dbReference type="CCDS" id="CCDS683.1">
    <molecule id="Q96AE4-1"/>
</dbReference>
<dbReference type="PIR" id="A53184">
    <property type="entry name" value="A53184"/>
</dbReference>
<dbReference type="RefSeq" id="NP_001290362.1">
    <property type="nucleotide sequence ID" value="NM_001303433.1"/>
</dbReference>
<dbReference type="RefSeq" id="NP_003893.2">
    <molecule id="Q96AE4-1"/>
    <property type="nucleotide sequence ID" value="NM_003902.4"/>
</dbReference>
<dbReference type="RefSeq" id="XP_016858232.1">
    <molecule id="Q96AE4-2"/>
    <property type="nucleotide sequence ID" value="XM_017002743.3"/>
</dbReference>
<dbReference type="RefSeq" id="XP_047289448.1">
    <molecule id="Q96AE4-1"/>
    <property type="nucleotide sequence ID" value="XM_047433492.1"/>
</dbReference>
<dbReference type="RefSeq" id="XP_054195436.1">
    <molecule id="Q96AE4-2"/>
    <property type="nucleotide sequence ID" value="XM_054339461.1"/>
</dbReference>
<dbReference type="RefSeq" id="XP_054195437.1">
    <molecule id="Q96AE4-1"/>
    <property type="nucleotide sequence ID" value="XM_054339462.1"/>
</dbReference>
<dbReference type="PDB" id="1J4W">
    <property type="method" value="NMR"/>
    <property type="chains" value="A=278-447"/>
</dbReference>
<dbReference type="PDB" id="2KXH">
    <property type="method" value="NMR"/>
    <property type="chains" value="B=27-52"/>
</dbReference>
<dbReference type="PDB" id="4LIJ">
    <property type="method" value="X-ray"/>
    <property type="resolution" value="1.80 A"/>
    <property type="chains" value="A/B/C=86-175"/>
</dbReference>
<dbReference type="PDB" id="6Y24">
    <property type="method" value="X-ray"/>
    <property type="resolution" value="1.86 A"/>
    <property type="chains" value="A=365-455"/>
</dbReference>
<dbReference type="PDB" id="6Y2C">
    <property type="method" value="X-ray"/>
    <property type="resolution" value="2.00 A"/>
    <property type="chains" value="A/B=261-351"/>
</dbReference>
<dbReference type="PDB" id="6Y2D">
    <property type="method" value="X-ray"/>
    <property type="resolution" value="1.90 A"/>
    <property type="chains" value="A/B/C/D=185-259"/>
</dbReference>
<dbReference type="PDB" id="8P25">
    <property type="method" value="NMR"/>
    <property type="chains" value="A=21-56"/>
</dbReference>
<dbReference type="PDBsum" id="1J4W"/>
<dbReference type="PDBsum" id="2KXH"/>
<dbReference type="PDBsum" id="4LIJ"/>
<dbReference type="PDBsum" id="6Y24"/>
<dbReference type="PDBsum" id="6Y2C"/>
<dbReference type="PDBsum" id="6Y2D"/>
<dbReference type="PDBsum" id="8P25"/>
<dbReference type="SMR" id="Q96AE4"/>
<dbReference type="BioGRID" id="114399">
    <property type="interactions" value="319"/>
</dbReference>
<dbReference type="DIP" id="DIP-47273N"/>
<dbReference type="ELM" id="Q96AE4"/>
<dbReference type="FunCoup" id="Q96AE4">
    <property type="interactions" value="5050"/>
</dbReference>
<dbReference type="IntAct" id="Q96AE4">
    <property type="interactions" value="87"/>
</dbReference>
<dbReference type="MINT" id="Q96AE4"/>
<dbReference type="STRING" id="9606.ENSP00000359804"/>
<dbReference type="BindingDB" id="Q96AE4"/>
<dbReference type="ChEMBL" id="CHEMBL4295922"/>
<dbReference type="DrugBank" id="DB05786">
    <property type="generic name" value="Irofulven"/>
</dbReference>
<dbReference type="DrugBank" id="DB12893">
    <property type="generic name" value="Sacituzumab govitecan"/>
</dbReference>
<dbReference type="GlyGen" id="Q96AE4">
    <property type="glycosylation" value="6 sites, 1 O-linked glycan (6 sites)"/>
</dbReference>
<dbReference type="iPTMnet" id="Q96AE4"/>
<dbReference type="MetOSite" id="Q96AE4"/>
<dbReference type="PhosphoSitePlus" id="Q96AE4"/>
<dbReference type="SwissPalm" id="Q96AE4"/>
<dbReference type="BioMuta" id="FUBP1"/>
<dbReference type="DMDM" id="116241370"/>
<dbReference type="REPRODUCTION-2DPAGE" id="IPI00375441"/>
<dbReference type="jPOST" id="Q96AE4"/>
<dbReference type="MassIVE" id="Q96AE4"/>
<dbReference type="PaxDb" id="9606-ENSP00000359804"/>
<dbReference type="PeptideAtlas" id="Q96AE4"/>
<dbReference type="ProteomicsDB" id="75958">
    <molecule id="Q96AE4-1"/>
</dbReference>
<dbReference type="ProteomicsDB" id="75959">
    <molecule id="Q96AE4-2"/>
</dbReference>
<dbReference type="Pumba" id="Q96AE4"/>
<dbReference type="TopDownProteomics" id="Q96AE4-1">
    <molecule id="Q96AE4-1"/>
</dbReference>
<dbReference type="Antibodypedia" id="1310">
    <property type="antibodies" value="328 antibodies from 34 providers"/>
</dbReference>
<dbReference type="DNASU" id="8880"/>
<dbReference type="Ensembl" id="ENST00000294623.8">
    <molecule id="Q96AE4-2"/>
    <property type="protein sequence ID" value="ENSP00000294623.4"/>
    <property type="gene ID" value="ENSG00000162613.18"/>
</dbReference>
<dbReference type="Ensembl" id="ENST00000370768.7">
    <molecule id="Q96AE4-1"/>
    <property type="protein sequence ID" value="ENSP00000359804.2"/>
    <property type="gene ID" value="ENSG00000162613.18"/>
</dbReference>
<dbReference type="GeneID" id="8880"/>
<dbReference type="KEGG" id="hsa:8880"/>
<dbReference type="MANE-Select" id="ENST00000370768.7">
    <property type="protein sequence ID" value="ENSP00000359804.2"/>
    <property type="RefSeq nucleotide sequence ID" value="NM_003902.5"/>
    <property type="RefSeq protein sequence ID" value="NP_003893.2"/>
</dbReference>
<dbReference type="UCSC" id="uc001dii.4">
    <molecule id="Q96AE4-1"/>
    <property type="organism name" value="human"/>
</dbReference>
<dbReference type="AGR" id="HGNC:4004"/>
<dbReference type="CTD" id="8880"/>
<dbReference type="DisGeNET" id="8880"/>
<dbReference type="GeneCards" id="FUBP1"/>
<dbReference type="HGNC" id="HGNC:4004">
    <property type="gene designation" value="FUBP1"/>
</dbReference>
<dbReference type="HPA" id="ENSG00000162613">
    <property type="expression patterns" value="Low tissue specificity"/>
</dbReference>
<dbReference type="MalaCards" id="FUBP1"/>
<dbReference type="MIM" id="603444">
    <property type="type" value="gene"/>
</dbReference>
<dbReference type="neXtProt" id="NX_Q96AE4"/>
<dbReference type="OpenTargets" id="ENSG00000162613"/>
<dbReference type="PharmGKB" id="PA28420"/>
<dbReference type="VEuPathDB" id="HostDB:ENSG00000162613"/>
<dbReference type="eggNOG" id="KOG1676">
    <property type="taxonomic scope" value="Eukaryota"/>
</dbReference>
<dbReference type="GeneTree" id="ENSGT00940000160043"/>
<dbReference type="HOGENOM" id="CLU_014285_1_0_1"/>
<dbReference type="InParanoid" id="Q96AE4"/>
<dbReference type="OMA" id="QPWGPYG"/>
<dbReference type="OrthoDB" id="5204190at2759"/>
<dbReference type="PAN-GO" id="Q96AE4">
    <property type="GO annotations" value="4 GO annotations based on evolutionary models"/>
</dbReference>
<dbReference type="PhylomeDB" id="Q96AE4"/>
<dbReference type="TreeFam" id="TF313654"/>
<dbReference type="PathwayCommons" id="Q96AE4"/>
<dbReference type="SignaLink" id="Q96AE4"/>
<dbReference type="SIGNOR" id="Q96AE4"/>
<dbReference type="BioGRID-ORCS" id="8880">
    <property type="hits" value="165 hits in 1188 CRISPR screens"/>
</dbReference>
<dbReference type="CD-CODE" id="DEE660B4">
    <property type="entry name" value="Stress granule"/>
</dbReference>
<dbReference type="ChiTaRS" id="FUBP1">
    <property type="organism name" value="human"/>
</dbReference>
<dbReference type="EvolutionaryTrace" id="Q96AE4"/>
<dbReference type="GeneWiki" id="Far_upstream_element-binding_protein_1"/>
<dbReference type="GenomeRNAi" id="8880"/>
<dbReference type="Pharos" id="Q96AE4">
    <property type="development level" value="Tbio"/>
</dbReference>
<dbReference type="PRO" id="PR:Q96AE4"/>
<dbReference type="Proteomes" id="UP000005640">
    <property type="component" value="Chromosome 1"/>
</dbReference>
<dbReference type="RNAct" id="Q96AE4">
    <property type="molecule type" value="protein"/>
</dbReference>
<dbReference type="Bgee" id="ENSG00000162613">
    <property type="expression patterns" value="Expressed in ventricular zone and 212 other cell types or tissues"/>
</dbReference>
<dbReference type="ExpressionAtlas" id="Q96AE4">
    <property type="expression patterns" value="baseline and differential"/>
</dbReference>
<dbReference type="GO" id="GO:0005737">
    <property type="term" value="C:cytoplasm"/>
    <property type="evidence" value="ECO:0000318"/>
    <property type="project" value="GO_Central"/>
</dbReference>
<dbReference type="GO" id="GO:0005654">
    <property type="term" value="C:nucleoplasm"/>
    <property type="evidence" value="ECO:0000314"/>
    <property type="project" value="HPA"/>
</dbReference>
<dbReference type="GO" id="GO:0005634">
    <property type="term" value="C:nucleus"/>
    <property type="evidence" value="ECO:0000314"/>
    <property type="project" value="UniProtKB"/>
</dbReference>
<dbReference type="GO" id="GO:0003729">
    <property type="term" value="F:mRNA binding"/>
    <property type="evidence" value="ECO:0000318"/>
    <property type="project" value="GO_Central"/>
</dbReference>
<dbReference type="GO" id="GO:0003723">
    <property type="term" value="F:RNA binding"/>
    <property type="evidence" value="ECO:0007005"/>
    <property type="project" value="UniProtKB"/>
</dbReference>
<dbReference type="GO" id="GO:0003697">
    <property type="term" value="F:single-stranded DNA binding"/>
    <property type="evidence" value="ECO:0000304"/>
    <property type="project" value="ProtInc"/>
</dbReference>
<dbReference type="GO" id="GO:0010628">
    <property type="term" value="P:positive regulation of gene expression"/>
    <property type="evidence" value="ECO:0000314"/>
    <property type="project" value="UniProtKB"/>
</dbReference>
<dbReference type="GO" id="GO:0006357">
    <property type="term" value="P:regulation of transcription by RNA polymerase II"/>
    <property type="evidence" value="ECO:0000318"/>
    <property type="project" value="GO_Central"/>
</dbReference>
<dbReference type="CDD" id="cd22478">
    <property type="entry name" value="KH-I_FUBP1_rpt1"/>
    <property type="match status" value="1"/>
</dbReference>
<dbReference type="CDD" id="cd22481">
    <property type="entry name" value="KH-I_FUBP1_rpt2"/>
    <property type="match status" value="1"/>
</dbReference>
<dbReference type="CDD" id="cd22484">
    <property type="entry name" value="KH-I_FUBP1_rpt3"/>
    <property type="match status" value="1"/>
</dbReference>
<dbReference type="CDD" id="cd22487">
    <property type="entry name" value="KH-I_FUBP1_rpt4"/>
    <property type="match status" value="1"/>
</dbReference>
<dbReference type="FunFam" id="3.30.1370.10:FF:000015">
    <property type="entry name" value="Far upstream element-binding protein 1 isoform X1"/>
    <property type="match status" value="1"/>
</dbReference>
<dbReference type="FunFam" id="3.30.1370.10:FF:000007">
    <property type="entry name" value="far upstream element-binding protein 1 isoform X1"/>
    <property type="match status" value="1"/>
</dbReference>
<dbReference type="FunFam" id="3.30.1370.10:FF:000008">
    <property type="entry name" value="far upstream element-binding protein 1 isoform X1"/>
    <property type="match status" value="1"/>
</dbReference>
<dbReference type="FunFam" id="3.30.1370.10:FF:000010">
    <property type="entry name" value="far upstream element-binding protein 1 isoform X1"/>
    <property type="match status" value="1"/>
</dbReference>
<dbReference type="Gene3D" id="3.30.1370.10">
    <property type="entry name" value="K Homology domain, type 1"/>
    <property type="match status" value="4"/>
</dbReference>
<dbReference type="InterPro" id="IPR015096">
    <property type="entry name" value="FUBP_C"/>
</dbReference>
<dbReference type="InterPro" id="IPR048249">
    <property type="entry name" value="KH-I_FUBP1_dom1"/>
</dbReference>
<dbReference type="InterPro" id="IPR048250">
    <property type="entry name" value="KH-I_FUBP1_dom2"/>
</dbReference>
<dbReference type="InterPro" id="IPR048251">
    <property type="entry name" value="KH-I_FUBP1_dom3"/>
</dbReference>
<dbReference type="InterPro" id="IPR048252">
    <property type="entry name" value="KH-I_FUBP1_dom4"/>
</dbReference>
<dbReference type="InterPro" id="IPR004087">
    <property type="entry name" value="KH_dom"/>
</dbReference>
<dbReference type="InterPro" id="IPR004088">
    <property type="entry name" value="KH_dom_type_1"/>
</dbReference>
<dbReference type="InterPro" id="IPR036612">
    <property type="entry name" value="KH_dom_type_1_sf"/>
</dbReference>
<dbReference type="PANTHER" id="PTHR10288">
    <property type="entry name" value="KH DOMAIN CONTAINING RNA BINDING PROTEIN"/>
    <property type="match status" value="1"/>
</dbReference>
<dbReference type="Pfam" id="PF09005">
    <property type="entry name" value="FUBP_C"/>
    <property type="match status" value="2"/>
</dbReference>
<dbReference type="Pfam" id="PF00013">
    <property type="entry name" value="KH_1"/>
    <property type="match status" value="4"/>
</dbReference>
<dbReference type="SMART" id="SM00322">
    <property type="entry name" value="KH"/>
    <property type="match status" value="4"/>
</dbReference>
<dbReference type="SUPFAM" id="SSF54791">
    <property type="entry name" value="Eukaryotic type KH-domain (KH-domain type I)"/>
    <property type="match status" value="4"/>
</dbReference>
<dbReference type="PROSITE" id="PS50084">
    <property type="entry name" value="KH_TYPE_1"/>
    <property type="match status" value="4"/>
</dbReference>
<keyword id="KW-0002">3D-structure</keyword>
<keyword id="KW-0007">Acetylation</keyword>
<keyword id="KW-0025">Alternative splicing</keyword>
<keyword id="KW-0903">Direct protein sequencing</keyword>
<keyword id="KW-0238">DNA-binding</keyword>
<keyword id="KW-0488">Methylation</keyword>
<keyword id="KW-0539">Nucleus</keyword>
<keyword id="KW-0597">Phosphoprotein</keyword>
<keyword id="KW-1267">Proteomics identification</keyword>
<keyword id="KW-1185">Reference proteome</keyword>
<keyword id="KW-0677">Repeat</keyword>
<keyword id="KW-0804">Transcription</keyword>
<keyword id="KW-0805">Transcription regulation</keyword>
<keyword id="KW-0832">Ubl conjugation</keyword>
<evidence type="ECO:0000250" key="1">
    <source>
        <dbReference type="UniProtKB" id="Q91WJ8"/>
    </source>
</evidence>
<evidence type="ECO:0000255" key="2">
    <source>
        <dbReference type="PROSITE-ProRule" id="PRU00117"/>
    </source>
</evidence>
<evidence type="ECO:0000256" key="3">
    <source>
        <dbReference type="SAM" id="MobiDB-lite"/>
    </source>
</evidence>
<evidence type="ECO:0000269" key="4">
    <source>
    </source>
</evidence>
<evidence type="ECO:0000269" key="5">
    <source>
    </source>
</evidence>
<evidence type="ECO:0000269" key="6">
    <source>
    </source>
</evidence>
<evidence type="ECO:0000269" key="7">
    <source>
    </source>
</evidence>
<evidence type="ECO:0000303" key="8">
    <source>
    </source>
</evidence>
<evidence type="ECO:0000305" key="9"/>
<evidence type="ECO:0007744" key="10">
    <source>
    </source>
</evidence>
<evidence type="ECO:0007744" key="11">
    <source>
    </source>
</evidence>
<evidence type="ECO:0007744" key="12">
    <source>
    </source>
</evidence>
<evidence type="ECO:0007744" key="13">
    <source>
    </source>
</evidence>
<evidence type="ECO:0007744" key="14">
    <source>
    </source>
</evidence>
<evidence type="ECO:0007744" key="15">
    <source>
    </source>
</evidence>
<evidence type="ECO:0007744" key="16">
    <source>
    </source>
</evidence>
<evidence type="ECO:0007829" key="17">
    <source>
        <dbReference type="PDB" id="1J4W"/>
    </source>
</evidence>
<evidence type="ECO:0007829" key="18">
    <source>
        <dbReference type="PDB" id="2KXH"/>
    </source>
</evidence>
<evidence type="ECO:0007829" key="19">
    <source>
        <dbReference type="PDB" id="4LIJ"/>
    </source>
</evidence>
<evidence type="ECO:0007829" key="20">
    <source>
        <dbReference type="PDB" id="6Y24"/>
    </source>
</evidence>
<evidence type="ECO:0007829" key="21">
    <source>
        <dbReference type="PDB" id="6Y2C"/>
    </source>
</evidence>
<evidence type="ECO:0007829" key="22">
    <source>
        <dbReference type="PDB" id="6Y2D"/>
    </source>
</evidence>
<evidence type="ECO:0007829" key="23">
    <source>
        <dbReference type="PDB" id="8P25"/>
    </source>
</evidence>
<sequence length="644" mass="67560">MADYSTVPPPSSGSAGGGGGGGGGGGVNDAFKDALQRARQIAAKIGGDAGTSLNSNDYGYGGQKRPLEDGDQPDAKKVAPQNDSFGTQLPPMHQQQSRSVMTEEYKVPDGMVGFIIGRGGEQISRIQQESGCKIQIAPDSGGLPERSCMLTGTPESVQSAKRLLDQIVEKGRPAPGFHHGDGPGNAVQEIMIPASKAGLVIGKGGETIKQLQERAGVKMVMIQDGPQNTGADKPLRITGDPYKVQQAKEMVLELIRDQGGFREVRNEYGSRIGGNEGIDVPIPRFAVGIVIGRNGEMIKKIQNDAGVRIQFKPDDGTTPERIAQITGPPDRCQHAAEIITDLLRSVQAGNPGGPGPGGRGRGRGQGNWNMGPPGGLQEFNFIVPTGKTGLIIGKGGETIKSISQQSGARIELQRNPPPNADPNMKLFTIRGTPQQIDYARQLIEEKIGGPVNPLGPPVPHGPHGVPGPHGPPGPPGPGTPMGPYNPAPYNPGPPGPAPHGPPAPYAPQGWGNAYPHWQQQAPPDPAKAGTDPNSAAWAAYYAHYYQQQAQPPPAAPAGAPTTTQTNGQGDQQNPAPAGQVDYTKAWEEYYKKMGQAVPAPTGAPPGGQPDYSAAWAEYYRQQAAYYAQTSPQGMPQHPPAPQGQ</sequence>
<accession>Q96AE4</accession>
<accession>Q12828</accession>
<comment type="function">
    <text evidence="7">Regulates MYC expression by binding to a single-stranded far-upstream element (FUSE) upstream of the MYC promoter. May act both as activator and repressor of transcription.</text>
</comment>
<comment type="subunit">
    <text evidence="4 5 6">Found in a complex with PUF60 and far upstream element (FUSE) DNA segment. Interacts with PUF60 and JTV1.</text>
</comment>
<comment type="interaction">
    <interactant intactId="EBI-711404">
        <id>Q96AE4</id>
    </interactant>
    <interactant intactId="EBI-745226">
        <id>Q13155</id>
        <label>AIMP2</label>
    </interactant>
    <organismsDiffer>false</organismsDiffer>
    <experiments>4</experiments>
</comment>
<comment type="interaction">
    <interactant intactId="EBI-711404">
        <id>Q96AE4</id>
    </interactant>
    <interactant intactId="EBI-723510">
        <id>Q9UPT9</id>
        <label>USP22</label>
    </interactant>
    <organismsDiffer>false</organismsDiffer>
    <experiments>3</experiments>
</comment>
<comment type="interaction">
    <interactant intactId="EBI-5455665">
        <id>Q96AE4-1</id>
    </interactant>
    <interactant intactId="EBI-11529177">
        <id>Q9UHX1-2</id>
        <label>PUF60</label>
    </interactant>
    <organismsDiffer>false</organismsDiffer>
    <experiments>2</experiments>
</comment>
<comment type="interaction">
    <interactant intactId="EBI-12121668">
        <id>Q96AE4-2</id>
    </interactant>
    <interactant intactId="EBI-715243">
        <id>P50995</id>
        <label>ANXA11</label>
    </interactant>
    <organismsDiffer>false</organismsDiffer>
    <experiments>3</experiments>
</comment>
<comment type="interaction">
    <interactant intactId="EBI-12121668">
        <id>Q96AE4-2</id>
    </interactant>
    <interactant intactId="EBI-741424">
        <id>Q8NDC0</id>
        <label>MAPK1IP1L</label>
    </interactant>
    <organismsDiffer>false</organismsDiffer>
    <experiments>3</experiments>
</comment>
<comment type="interaction">
    <interactant intactId="EBI-12121668">
        <id>Q96AE4-2</id>
    </interactant>
    <interactant intactId="EBI-2515597">
        <id>Q96HR8</id>
        <label>NAF1</label>
    </interactant>
    <organismsDiffer>false</organismsDiffer>
    <experiments>3</experiments>
</comment>
<comment type="interaction">
    <interactant intactId="EBI-12121668">
        <id>Q96AE4-2</id>
    </interactant>
    <interactant intactId="EBI-11285481">
        <id>Q6NWY9</id>
        <label>PRPF40B</label>
    </interactant>
    <organismsDiffer>false</organismsDiffer>
    <experiments>3</experiments>
</comment>
<comment type="interaction">
    <interactant intactId="EBI-12121668">
        <id>Q96AE4-2</id>
    </interactant>
    <interactant intactId="EBI-740924">
        <id>Q9NZ81</id>
        <label>PRR13</label>
    </interactant>
    <organismsDiffer>false</organismsDiffer>
    <experiments>3</experiments>
</comment>
<comment type="interaction">
    <interactant intactId="EBI-12121668">
        <id>Q96AE4-2</id>
    </interactant>
    <interactant intactId="EBI-11529177">
        <id>Q9UHX1-2</id>
        <label>PUF60</label>
    </interactant>
    <organismsDiffer>false</organismsDiffer>
    <experiments>3</experiments>
</comment>
<comment type="interaction">
    <interactant intactId="EBI-12121668">
        <id>Q96AE4-2</id>
    </interactant>
    <interactant intactId="EBI-607085">
        <id>P09012</id>
        <label>SNRPA</label>
    </interactant>
    <organismsDiffer>false</organismsDiffer>
    <experiments>3</experiments>
</comment>
<comment type="interaction">
    <interactant intactId="EBI-12121668">
        <id>Q96AE4-2</id>
    </interactant>
    <interactant intactId="EBI-372475">
        <id>P14678-2</id>
        <label>SNRPB</label>
    </interactant>
    <organismsDiffer>false</organismsDiffer>
    <experiments>3</experiments>
</comment>
<comment type="interaction">
    <interactant intactId="EBI-12121668">
        <id>Q96AE4-2</id>
    </interactant>
    <interactant intactId="EBI-766589">
        <id>P09234</id>
        <label>SNRPC</label>
    </interactant>
    <organismsDiffer>false</organismsDiffer>
    <experiments>3</experiments>
</comment>
<comment type="interaction">
    <interactant intactId="EBI-12121668">
        <id>Q96AE4-2</id>
    </interactant>
    <interactant intactId="EBI-11064654">
        <id>Q01085-2</id>
        <label>TIAL1</label>
    </interactant>
    <organismsDiffer>false</organismsDiffer>
    <experiments>3</experiments>
</comment>
<comment type="interaction">
    <interactant intactId="EBI-12121668">
        <id>Q96AE4-2</id>
    </interactant>
    <interactant intactId="EBI-11097439">
        <id>P26368-2</id>
        <label>U2AF2</label>
    </interactant>
    <organismsDiffer>false</organismsDiffer>
    <experiments>3</experiments>
</comment>
<comment type="interaction">
    <interactant intactId="EBI-12121668">
        <id>Q96AE4-2</id>
    </interactant>
    <interactant intactId="EBI-2559305">
        <id>A5D8V6</id>
        <label>VPS37C</label>
    </interactant>
    <organismsDiffer>false</organismsDiffer>
    <experiments>3</experiments>
</comment>
<comment type="subcellular location">
    <subcellularLocation>
        <location evidence="9">Nucleus</location>
    </subcellularLocation>
</comment>
<comment type="alternative products">
    <event type="alternative splicing"/>
    <isoform>
        <id>Q96AE4-1</id>
        <name>1</name>
        <sequence type="displayed"/>
    </isoform>
    <isoform>
        <id>Q96AE4-2</id>
        <name>2</name>
        <sequence type="described" ref="VSP_021107 VSP_008321"/>
    </isoform>
</comment>
<comment type="PTM">
    <text evidence="6">Ubiquitinated. This targets the protein for proteasome-mediated degradation.</text>
</comment>
<gene>
    <name type="primary">FUBP1</name>
</gene>
<feature type="initiator methionine" description="Removed" evidence="11">
    <location>
        <position position="1"/>
    </location>
</feature>
<feature type="chain" id="PRO_0000050135" description="Far upstream element-binding protein 1">
    <location>
        <begin position="2"/>
        <end position="644"/>
    </location>
</feature>
<feature type="domain" description="KH 1" evidence="2">
    <location>
        <begin position="100"/>
        <end position="164"/>
    </location>
</feature>
<feature type="domain" description="KH 2" evidence="2">
    <location>
        <begin position="185"/>
        <end position="251"/>
    </location>
</feature>
<feature type="domain" description="KH 3" evidence="2">
    <location>
        <begin position="275"/>
        <end position="339"/>
    </location>
</feature>
<feature type="domain" description="KH 4" evidence="2">
    <location>
        <begin position="376"/>
        <end position="443"/>
    </location>
</feature>
<feature type="region of interest" description="Disordered" evidence="3">
    <location>
        <begin position="1"/>
        <end position="31"/>
    </location>
</feature>
<feature type="region of interest" description="Disordered" evidence="3">
    <location>
        <begin position="44"/>
        <end position="94"/>
    </location>
</feature>
<feature type="region of interest" description="Disordered" evidence="3">
    <location>
        <begin position="346"/>
        <end position="365"/>
    </location>
</feature>
<feature type="region of interest" description="Disordered" evidence="3">
    <location>
        <begin position="447"/>
        <end position="532"/>
    </location>
</feature>
<feature type="region of interest" description="Disordered" evidence="3">
    <location>
        <begin position="548"/>
        <end position="580"/>
    </location>
</feature>
<feature type="compositionally biased region" description="Gly residues" evidence="3">
    <location>
        <begin position="14"/>
        <end position="27"/>
    </location>
</feature>
<feature type="compositionally biased region" description="Basic and acidic residues" evidence="3">
    <location>
        <begin position="65"/>
        <end position="77"/>
    </location>
</feature>
<feature type="compositionally biased region" description="Polar residues" evidence="3">
    <location>
        <begin position="81"/>
        <end position="94"/>
    </location>
</feature>
<feature type="compositionally biased region" description="Gly residues" evidence="3">
    <location>
        <begin position="350"/>
        <end position="365"/>
    </location>
</feature>
<feature type="compositionally biased region" description="Pro residues" evidence="3">
    <location>
        <begin position="468"/>
        <end position="505"/>
    </location>
</feature>
<feature type="compositionally biased region" description="Low complexity" evidence="3">
    <location>
        <begin position="556"/>
        <end position="573"/>
    </location>
</feature>
<feature type="modified residue" description="N-acetylalanine" evidence="11">
    <location>
        <position position="2"/>
    </location>
</feature>
<feature type="modified residue" description="Phosphoserine" evidence="15">
    <location>
        <position position="52"/>
    </location>
</feature>
<feature type="modified residue" description="Phosphoserine" evidence="15">
    <location>
        <position position="55"/>
    </location>
</feature>
<feature type="modified residue" description="Phosphoserine" evidence="14 15">
    <location>
        <position position="140"/>
    </location>
</feature>
<feature type="modified residue" description="Phosphothreonine" evidence="10 13 15">
    <location>
        <position position="153"/>
    </location>
</feature>
<feature type="modified residue" description="Omega-N-methylarginine" evidence="1">
    <location>
        <position position="321"/>
    </location>
</feature>
<feature type="modified residue" description="Omega-N-methylarginine" evidence="16">
    <location>
        <position position="359"/>
    </location>
</feature>
<feature type="modified residue" description="Omega-N-methylarginine" evidence="16">
    <location>
        <position position="361"/>
    </location>
</feature>
<feature type="modified residue" description="Omega-N-methylarginine" evidence="16">
    <location>
        <position position="363"/>
    </location>
</feature>
<feature type="modified residue" description="Phosphothreonine" evidence="15">
    <location>
        <position position="432"/>
    </location>
</feature>
<feature type="modified residue" description="Phosphoserine" evidence="10 12 13 14">
    <location>
        <position position="630"/>
    </location>
</feature>
<feature type="splice variant" id="VSP_021107" description="In isoform 2." evidence="8">
    <location>
        <position position="97"/>
    </location>
</feature>
<feature type="splice variant" id="VSP_008321" description="In isoform 2." evidence="8">
    <original>GQ</original>
    <variation>CRFDPASIELAL</variation>
    <location>
        <begin position="643"/>
        <end position="644"/>
    </location>
</feature>
<feature type="sequence variant" id="VAR_049679" description="In dbSNP:rs12748509.">
    <original>I</original>
    <variation>K</variation>
    <location>
        <position position="399"/>
    </location>
</feature>
<feature type="turn" evidence="23">
    <location>
        <begin position="24"/>
        <end position="26"/>
    </location>
</feature>
<feature type="helix" evidence="18">
    <location>
        <begin position="30"/>
        <end position="44"/>
    </location>
</feature>
<feature type="turn" evidence="23">
    <location>
        <begin position="46"/>
        <end position="48"/>
    </location>
</feature>
<feature type="strand" evidence="19">
    <location>
        <begin position="101"/>
        <end position="108"/>
    </location>
</feature>
<feature type="helix" evidence="19">
    <location>
        <begin position="109"/>
        <end position="111"/>
    </location>
</feature>
<feature type="helix" evidence="19">
    <location>
        <begin position="112"/>
        <end position="116"/>
    </location>
</feature>
<feature type="helix" evidence="19">
    <location>
        <begin position="118"/>
        <end position="120"/>
    </location>
</feature>
<feature type="helix" evidence="19">
    <location>
        <begin position="121"/>
        <end position="130"/>
    </location>
</feature>
<feature type="strand" evidence="19">
    <location>
        <begin position="133"/>
        <end position="136"/>
    </location>
</feature>
<feature type="strand" evidence="19">
    <location>
        <begin position="144"/>
        <end position="152"/>
    </location>
</feature>
<feature type="helix" evidence="19">
    <location>
        <begin position="154"/>
        <end position="168"/>
    </location>
</feature>
<feature type="strand" evidence="22">
    <location>
        <begin position="186"/>
        <end position="192"/>
    </location>
</feature>
<feature type="helix" evidence="22">
    <location>
        <begin position="194"/>
        <end position="196"/>
    </location>
</feature>
<feature type="helix" evidence="22">
    <location>
        <begin position="197"/>
        <end position="201"/>
    </location>
</feature>
<feature type="helix" evidence="22">
    <location>
        <begin position="203"/>
        <end position="205"/>
    </location>
</feature>
<feature type="helix" evidence="22">
    <location>
        <begin position="206"/>
        <end position="215"/>
    </location>
</feature>
<feature type="strand" evidence="22">
    <location>
        <begin position="217"/>
        <end position="221"/>
    </location>
</feature>
<feature type="strand" evidence="22">
    <location>
        <begin position="233"/>
        <end position="239"/>
    </location>
</feature>
<feature type="helix" evidence="22">
    <location>
        <begin position="241"/>
        <end position="255"/>
    </location>
</feature>
<feature type="helix" evidence="21">
    <location>
        <begin position="261"/>
        <end position="266"/>
    </location>
</feature>
<feature type="strand" evidence="21">
    <location>
        <begin position="278"/>
        <end position="283"/>
    </location>
</feature>
<feature type="helix" evidence="21">
    <location>
        <begin position="284"/>
        <end position="286"/>
    </location>
</feature>
<feature type="helix" evidence="21">
    <location>
        <begin position="287"/>
        <end position="291"/>
    </location>
</feature>
<feature type="helix" evidence="21">
    <location>
        <begin position="293"/>
        <end position="295"/>
    </location>
</feature>
<feature type="helix" evidence="21">
    <location>
        <begin position="296"/>
        <end position="305"/>
    </location>
</feature>
<feature type="strand" evidence="21">
    <location>
        <begin position="308"/>
        <end position="311"/>
    </location>
</feature>
<feature type="strand" evidence="21">
    <location>
        <begin position="319"/>
        <end position="327"/>
    </location>
</feature>
<feature type="helix" evidence="21">
    <location>
        <begin position="329"/>
        <end position="345"/>
    </location>
</feature>
<feature type="strand" evidence="20">
    <location>
        <begin position="377"/>
        <end position="384"/>
    </location>
</feature>
<feature type="helix" evidence="20">
    <location>
        <begin position="385"/>
        <end position="387"/>
    </location>
</feature>
<feature type="helix" evidence="20">
    <location>
        <begin position="388"/>
        <end position="392"/>
    </location>
</feature>
<feature type="helix" evidence="20">
    <location>
        <begin position="394"/>
        <end position="396"/>
    </location>
</feature>
<feature type="helix" evidence="20">
    <location>
        <begin position="397"/>
        <end position="406"/>
    </location>
</feature>
<feature type="strand" evidence="20">
    <location>
        <begin position="409"/>
        <end position="412"/>
    </location>
</feature>
<feature type="turn" evidence="17">
    <location>
        <begin position="417"/>
        <end position="419"/>
    </location>
</feature>
<feature type="strand" evidence="20">
    <location>
        <begin position="424"/>
        <end position="431"/>
    </location>
</feature>
<feature type="helix" evidence="20">
    <location>
        <begin position="433"/>
        <end position="447"/>
    </location>
</feature>